<organism>
    <name type="scientific">Penicillium rubens (strain ATCC 28089 / DSM 1075 / NRRL 1951 / Wisconsin 54-1255)</name>
    <name type="common">Penicillium chrysogenum</name>
    <dbReference type="NCBI Taxonomy" id="500485"/>
    <lineage>
        <taxon>Eukaryota</taxon>
        <taxon>Fungi</taxon>
        <taxon>Dikarya</taxon>
        <taxon>Ascomycota</taxon>
        <taxon>Pezizomycotina</taxon>
        <taxon>Eurotiomycetes</taxon>
        <taxon>Eurotiomycetidae</taxon>
        <taxon>Eurotiales</taxon>
        <taxon>Aspergillaceae</taxon>
        <taxon>Penicillium</taxon>
        <taxon>Penicillium chrysogenum species complex</taxon>
    </lineage>
</organism>
<keyword id="KW-0031">Aminopeptidase</keyword>
<keyword id="KW-0325">Glycoprotein</keyword>
<keyword id="KW-0378">Hydrolase</keyword>
<keyword id="KW-0472">Membrane</keyword>
<keyword id="KW-0645">Protease</keyword>
<keyword id="KW-1185">Reference proteome</keyword>
<keyword id="KW-0720">Serine protease</keyword>
<keyword id="KW-0735">Signal-anchor</keyword>
<keyword id="KW-0812">Transmembrane</keyword>
<keyword id="KW-1133">Transmembrane helix</keyword>
<keyword id="KW-0926">Vacuole</keyword>
<evidence type="ECO:0000250" key="1"/>
<evidence type="ECO:0000255" key="2"/>
<evidence type="ECO:0000256" key="3">
    <source>
        <dbReference type="SAM" id="MobiDB-lite"/>
    </source>
</evidence>
<evidence type="ECO:0000305" key="4"/>
<name>DAPB_PENRW</name>
<dbReference type="EC" id="3.4.14.5"/>
<dbReference type="EMBL" id="AM920435">
    <property type="protein sequence ID" value="CAP85936.1"/>
    <property type="molecule type" value="Genomic_DNA"/>
</dbReference>
<dbReference type="RefSeq" id="XP_002563136.1">
    <property type="nucleotide sequence ID" value="XM_002563090.1"/>
</dbReference>
<dbReference type="SMR" id="B6HFS8"/>
<dbReference type="STRING" id="500485.B6HFS8"/>
<dbReference type="ESTHER" id="pencw-dapb">
    <property type="family name" value="DPP4N_Peptidase_S9"/>
</dbReference>
<dbReference type="MEROPS" id="S09.006"/>
<dbReference type="GlyCosmos" id="B6HFS8">
    <property type="glycosylation" value="4 sites, No reported glycans"/>
</dbReference>
<dbReference type="GeneID" id="8310705"/>
<dbReference type="KEGG" id="pcs:N7525_009020"/>
<dbReference type="VEuPathDB" id="FungiDB:PCH_Pc20g06070"/>
<dbReference type="eggNOG" id="KOG2100">
    <property type="taxonomic scope" value="Eukaryota"/>
</dbReference>
<dbReference type="HOGENOM" id="CLU_006105_0_1_1"/>
<dbReference type="OMA" id="MRTPQEN"/>
<dbReference type="OrthoDB" id="16520at2759"/>
<dbReference type="BioCyc" id="PCHR:PC20G06070-MONOMER"/>
<dbReference type="Proteomes" id="UP000000724">
    <property type="component" value="Contig Pc00c20"/>
</dbReference>
<dbReference type="GO" id="GO:0005886">
    <property type="term" value="C:plasma membrane"/>
    <property type="evidence" value="ECO:0007669"/>
    <property type="project" value="TreeGrafter"/>
</dbReference>
<dbReference type="GO" id="GO:0005774">
    <property type="term" value="C:vacuolar membrane"/>
    <property type="evidence" value="ECO:0007669"/>
    <property type="project" value="UniProtKB-SubCell"/>
</dbReference>
<dbReference type="GO" id="GO:0004177">
    <property type="term" value="F:aminopeptidase activity"/>
    <property type="evidence" value="ECO:0007669"/>
    <property type="project" value="UniProtKB-KW"/>
</dbReference>
<dbReference type="GO" id="GO:0008239">
    <property type="term" value="F:dipeptidyl-peptidase activity"/>
    <property type="evidence" value="ECO:0007669"/>
    <property type="project" value="UniProtKB-EC"/>
</dbReference>
<dbReference type="GO" id="GO:0008236">
    <property type="term" value="F:serine-type peptidase activity"/>
    <property type="evidence" value="ECO:0007669"/>
    <property type="project" value="UniProtKB-KW"/>
</dbReference>
<dbReference type="GO" id="GO:0017000">
    <property type="term" value="P:antibiotic biosynthetic process"/>
    <property type="evidence" value="ECO:0007669"/>
    <property type="project" value="UniProtKB-ARBA"/>
</dbReference>
<dbReference type="GO" id="GO:0072330">
    <property type="term" value="P:monocarboxylic acid biosynthetic process"/>
    <property type="evidence" value="ECO:0007669"/>
    <property type="project" value="UniProtKB-ARBA"/>
</dbReference>
<dbReference type="GO" id="GO:0006508">
    <property type="term" value="P:proteolysis"/>
    <property type="evidence" value="ECO:0007669"/>
    <property type="project" value="UniProtKB-KW"/>
</dbReference>
<dbReference type="FunFam" id="3.40.50.1820:FF:000003">
    <property type="entry name" value="Dipeptidyl peptidase 4"/>
    <property type="match status" value="1"/>
</dbReference>
<dbReference type="Gene3D" id="3.40.50.1820">
    <property type="entry name" value="alpha/beta hydrolase"/>
    <property type="match status" value="1"/>
</dbReference>
<dbReference type="Gene3D" id="2.140.10.30">
    <property type="entry name" value="Dipeptidylpeptidase IV, N-terminal domain"/>
    <property type="match status" value="1"/>
</dbReference>
<dbReference type="InterPro" id="IPR029058">
    <property type="entry name" value="AB_hydrolase_fold"/>
</dbReference>
<dbReference type="InterPro" id="IPR001375">
    <property type="entry name" value="Peptidase_S9_cat"/>
</dbReference>
<dbReference type="InterPro" id="IPR002469">
    <property type="entry name" value="Peptidase_S9B_N"/>
</dbReference>
<dbReference type="InterPro" id="IPR050278">
    <property type="entry name" value="Serine_Prot_S9B/DPPIV"/>
</dbReference>
<dbReference type="PANTHER" id="PTHR11731:SF200">
    <property type="entry name" value="DIPEPTIDYL PEPTIDASE 10, ISOFORM B"/>
    <property type="match status" value="1"/>
</dbReference>
<dbReference type="PANTHER" id="PTHR11731">
    <property type="entry name" value="PROTEASE FAMILY S9B,C DIPEPTIDYL-PEPTIDASE IV-RELATED"/>
    <property type="match status" value="1"/>
</dbReference>
<dbReference type="Pfam" id="PF00930">
    <property type="entry name" value="DPPIV_N"/>
    <property type="match status" value="1"/>
</dbReference>
<dbReference type="Pfam" id="PF00326">
    <property type="entry name" value="Peptidase_S9"/>
    <property type="match status" value="1"/>
</dbReference>
<dbReference type="SUPFAM" id="SSF53474">
    <property type="entry name" value="alpha/beta-Hydrolases"/>
    <property type="match status" value="1"/>
</dbReference>
<dbReference type="SUPFAM" id="SSF82171">
    <property type="entry name" value="DPP6 N-terminal domain-like"/>
    <property type="match status" value="1"/>
</dbReference>
<feature type="chain" id="PRO_0000412156" description="Probable dipeptidyl-aminopeptidase B">
    <location>
        <begin position="1"/>
        <end position="903"/>
    </location>
</feature>
<feature type="topological domain" description="Cytoplasmic" evidence="2">
    <location>
        <begin position="1"/>
        <end position="90"/>
    </location>
</feature>
<feature type="transmembrane region" description="Helical; Signal-anchor for type II membrane protein" evidence="2">
    <location>
        <begin position="91"/>
        <end position="111"/>
    </location>
</feature>
<feature type="topological domain" description="Vacuolar" evidence="2">
    <location>
        <begin position="112"/>
        <end position="903"/>
    </location>
</feature>
<feature type="region of interest" description="Disordered" evidence="3">
    <location>
        <begin position="1"/>
        <end position="83"/>
    </location>
</feature>
<feature type="region of interest" description="Disordered" evidence="3">
    <location>
        <begin position="121"/>
        <end position="143"/>
    </location>
</feature>
<feature type="compositionally biased region" description="Polar residues" evidence="3">
    <location>
        <begin position="10"/>
        <end position="37"/>
    </location>
</feature>
<feature type="active site" description="Charge relay system" evidence="1">
    <location>
        <position position="754"/>
    </location>
</feature>
<feature type="active site" description="Charge relay system" evidence="1">
    <location>
        <position position="831"/>
    </location>
</feature>
<feature type="active site" description="Charge relay system" evidence="1">
    <location>
        <position position="864"/>
    </location>
</feature>
<feature type="glycosylation site" description="N-linked (GlcNAc...) asparagine" evidence="2">
    <location>
        <position position="268"/>
    </location>
</feature>
<feature type="glycosylation site" description="N-linked (GlcNAc...) asparagine" evidence="2">
    <location>
        <position position="349"/>
    </location>
</feature>
<feature type="glycosylation site" description="N-linked (GlcNAc...) asparagine" evidence="2">
    <location>
        <position position="640"/>
    </location>
</feature>
<feature type="glycosylation site" description="N-linked (GlcNAc...) asparagine" evidence="2">
    <location>
        <position position="808"/>
    </location>
</feature>
<gene>
    <name type="primary">dapB</name>
    <name type="ORF">Pc20g06070</name>
</gene>
<sequence length="903" mass="100902">MGKFEDDGNSESVPLTRQRSESLASQTSTDSGLSIASESFMKNHKGGNTMPTDGGDGDRYLDVEDGGETGLDEPLISSGTKTGSSSRLRKIVWLLVLLCVGGWVLSFVLFLTQKRPDTAALSSASTVEIHEPGPATGGTSHGKPVTLEQVLSGTWSPKSHAISWIAGPDGEDGLLVEQGEKQDAFLRVKDIRSSEDGVDNLETRVLMKKGYIWFDGEAMLSAKTWPSPDMNRVLVMTDIQSNWRHSYFGKYWILDVATQKAEPLDPGNLSGRVQLAAWSPTSDAVVFVRENNLYLRKLTSLEVTPITKDGDENLFYGVPDWVYEEEVFSGNTGTWWSDDGKFVAFLRTNETAVPEYPIQYFRSRPSGKQPPPGLENYPEVRQIKYPKPGSPNPIVNLQFYDVEKNEVFSFEMPEDFVDDERIIIEVVWASEGKVLIRETNRESDVVKIFVMDTKARTGKLVRSDDIAALDGGWVEPTQSTRVIPADPKNGRPHDGYVDTVIYEGYDHLAYFTPFDNPEPVMLTKGNWEVVNAPSAVDLKKGLVYFVATKEAPTQRHVYSVKLDGSDLRPLTDTSAPGFFDVSFSHGAGYGLLSYKGPAVPWQAVINTQGDEIDFINLIEENVELAKMVEESAIPTEVYSNVTIDGYTLQVLERRPPNFNPEKKYPVLFFLYGGPGSQTVDRKFTIDFQTYVASNLGYIVVTVDGRGTGFIGREARCLVRGNIGHYEAIDQIETAKIWASKSYVDESRMAVWGWSYGGYMTLKVLEQDAGETFQYGMAVAPVTDWRFYDSIYTERYMHTPEHNPSGYANASIDDVMALGHSVRFLIMHGVADDNVHLQNTLVLIDKLDLKNIDNYDMQVFPDSDHSIQFHMAHALVYERLSSWLINAFNGEWHRTANPKPQEST</sequence>
<reference key="1">
    <citation type="journal article" date="2008" name="Nat. Biotechnol.">
        <title>Genome sequencing and analysis of the filamentous fungus Penicillium chrysogenum.</title>
        <authorList>
            <person name="van den Berg M.A."/>
            <person name="Albang R."/>
            <person name="Albermann K."/>
            <person name="Badger J.H."/>
            <person name="Daran J.-M."/>
            <person name="Driessen A.J.M."/>
            <person name="Garcia-Estrada C."/>
            <person name="Fedorova N.D."/>
            <person name="Harris D.M."/>
            <person name="Heijne W.H.M."/>
            <person name="Joardar V.S."/>
            <person name="Kiel J.A.K.W."/>
            <person name="Kovalchuk A."/>
            <person name="Martin J.F."/>
            <person name="Nierman W.C."/>
            <person name="Nijland J.G."/>
            <person name="Pronk J.T."/>
            <person name="Roubos J.A."/>
            <person name="van der Klei I.J."/>
            <person name="van Peij N.N.M.E."/>
            <person name="Veenhuis M."/>
            <person name="von Doehren H."/>
            <person name="Wagner C."/>
            <person name="Wortman J.R."/>
            <person name="Bovenberg R.A.L."/>
        </authorList>
    </citation>
    <scope>NUCLEOTIDE SEQUENCE [LARGE SCALE GENOMIC DNA]</scope>
    <source>
        <strain>ATCC 28089 / DSM 1075 / NRRL 1951 / Wisconsin 54-1255</strain>
    </source>
</reference>
<protein>
    <recommendedName>
        <fullName>Probable dipeptidyl-aminopeptidase B</fullName>
        <shortName>DPAP B</shortName>
        <ecNumber>3.4.14.5</ecNumber>
    </recommendedName>
</protein>
<proteinExistence type="inferred from homology"/>
<accession>B6HFS8</accession>
<comment type="function">
    <text evidence="1">Type IV dipeptidyl-peptidase which removes N-terminal dipeptides sequentially from polypeptides having unsubstituted N-termini provided that the penultimate residue is proline.</text>
</comment>
<comment type="catalytic activity">
    <reaction>
        <text>Release of an N-terminal dipeptide, Xaa-Yaa-|-Zaa-, from a polypeptide, preferentially when Yaa is Pro, provided Zaa is neither Pro nor hydroxyproline.</text>
        <dbReference type="EC" id="3.4.14.5"/>
    </reaction>
</comment>
<comment type="subcellular location">
    <subcellularLocation>
        <location evidence="1">Vacuole membrane</location>
        <topology evidence="1">Single-pass type II membrane protein</topology>
    </subcellularLocation>
    <text evidence="1">Lysosome-like vacuoles.</text>
</comment>
<comment type="similarity">
    <text evidence="4">Belongs to the peptidase S9B family.</text>
</comment>